<protein>
    <recommendedName>
        <fullName evidence="1">Large ribosomal subunit protein uL23</fullName>
    </recommendedName>
    <alternativeName>
        <fullName evidence="2">50S ribosomal protein L23</fullName>
    </alternativeName>
</protein>
<accession>Q1D773</accession>
<feature type="chain" id="PRO_0000272780" description="Large ribosomal subunit protein uL23">
    <location>
        <begin position="1"/>
        <end position="97"/>
    </location>
</feature>
<gene>
    <name evidence="1" type="primary">rplW</name>
    <name type="ordered locus">MXAN_3301</name>
</gene>
<organism>
    <name type="scientific">Myxococcus xanthus (strain DK1622)</name>
    <dbReference type="NCBI Taxonomy" id="246197"/>
    <lineage>
        <taxon>Bacteria</taxon>
        <taxon>Pseudomonadati</taxon>
        <taxon>Myxococcota</taxon>
        <taxon>Myxococcia</taxon>
        <taxon>Myxococcales</taxon>
        <taxon>Cystobacterineae</taxon>
        <taxon>Myxococcaceae</taxon>
        <taxon>Myxococcus</taxon>
    </lineage>
</organism>
<comment type="function">
    <text evidence="1">One of the early assembly proteins it binds 23S rRNA. One of the proteins that surrounds the polypeptide exit tunnel on the outside of the ribosome. Forms the main docking site for trigger factor binding to the ribosome.</text>
</comment>
<comment type="subunit">
    <text evidence="1">Part of the 50S ribosomal subunit. Contacts protein L29, and trigger factor when it is bound to the ribosome.</text>
</comment>
<comment type="similarity">
    <text evidence="1">Belongs to the universal ribosomal protein uL23 family.</text>
</comment>
<evidence type="ECO:0000255" key="1">
    <source>
        <dbReference type="HAMAP-Rule" id="MF_01369"/>
    </source>
</evidence>
<evidence type="ECO:0000305" key="2"/>
<sequence>MNLNDVIKGPLITEKLDKAREKFRQYSFIVDRKATKHDVARAVETLFKVTVEGVNTNIVRGKIKRVGRSIGKRPNFKKAVVTLKQGDSIELFEGGAA</sequence>
<reference key="1">
    <citation type="journal article" date="2006" name="Proc. Natl. Acad. Sci. U.S.A.">
        <title>Evolution of sensory complexity recorded in a myxobacterial genome.</title>
        <authorList>
            <person name="Goldman B.S."/>
            <person name="Nierman W.C."/>
            <person name="Kaiser D."/>
            <person name="Slater S.C."/>
            <person name="Durkin A.S."/>
            <person name="Eisen J.A."/>
            <person name="Ronning C.M."/>
            <person name="Barbazuk W.B."/>
            <person name="Blanchard M."/>
            <person name="Field C."/>
            <person name="Halling C."/>
            <person name="Hinkle G."/>
            <person name="Iartchuk O."/>
            <person name="Kim H.S."/>
            <person name="Mackenzie C."/>
            <person name="Madupu R."/>
            <person name="Miller N."/>
            <person name="Shvartsbeyn A."/>
            <person name="Sullivan S.A."/>
            <person name="Vaudin M."/>
            <person name="Wiegand R."/>
            <person name="Kaplan H.B."/>
        </authorList>
    </citation>
    <scope>NUCLEOTIDE SEQUENCE [LARGE SCALE GENOMIC DNA]</scope>
    <source>
        <strain>DK1622</strain>
    </source>
</reference>
<proteinExistence type="inferred from homology"/>
<keyword id="KW-1185">Reference proteome</keyword>
<keyword id="KW-0687">Ribonucleoprotein</keyword>
<keyword id="KW-0689">Ribosomal protein</keyword>
<keyword id="KW-0694">RNA-binding</keyword>
<keyword id="KW-0699">rRNA-binding</keyword>
<name>RL23_MYXXD</name>
<dbReference type="EMBL" id="CP000113">
    <property type="protein sequence ID" value="ABF87941.1"/>
    <property type="molecule type" value="Genomic_DNA"/>
</dbReference>
<dbReference type="RefSeq" id="WP_002633606.1">
    <property type="nucleotide sequence ID" value="NC_008095.1"/>
</dbReference>
<dbReference type="SMR" id="Q1D773"/>
<dbReference type="STRING" id="246197.MXAN_3301"/>
<dbReference type="EnsemblBacteria" id="ABF87941">
    <property type="protein sequence ID" value="ABF87941"/>
    <property type="gene ID" value="MXAN_3301"/>
</dbReference>
<dbReference type="GeneID" id="41360654"/>
<dbReference type="KEGG" id="mxa:MXAN_3301"/>
<dbReference type="eggNOG" id="COG0089">
    <property type="taxonomic scope" value="Bacteria"/>
</dbReference>
<dbReference type="HOGENOM" id="CLU_037562_3_2_7"/>
<dbReference type="OrthoDB" id="9793353at2"/>
<dbReference type="Proteomes" id="UP000002402">
    <property type="component" value="Chromosome"/>
</dbReference>
<dbReference type="GO" id="GO:1990904">
    <property type="term" value="C:ribonucleoprotein complex"/>
    <property type="evidence" value="ECO:0007669"/>
    <property type="project" value="UniProtKB-KW"/>
</dbReference>
<dbReference type="GO" id="GO:0005840">
    <property type="term" value="C:ribosome"/>
    <property type="evidence" value="ECO:0007669"/>
    <property type="project" value="UniProtKB-KW"/>
</dbReference>
<dbReference type="GO" id="GO:0019843">
    <property type="term" value="F:rRNA binding"/>
    <property type="evidence" value="ECO:0007669"/>
    <property type="project" value="UniProtKB-UniRule"/>
</dbReference>
<dbReference type="GO" id="GO:0003735">
    <property type="term" value="F:structural constituent of ribosome"/>
    <property type="evidence" value="ECO:0007669"/>
    <property type="project" value="InterPro"/>
</dbReference>
<dbReference type="GO" id="GO:0006412">
    <property type="term" value="P:translation"/>
    <property type="evidence" value="ECO:0007669"/>
    <property type="project" value="UniProtKB-UniRule"/>
</dbReference>
<dbReference type="FunFam" id="3.30.70.330:FF:000001">
    <property type="entry name" value="50S ribosomal protein L23"/>
    <property type="match status" value="1"/>
</dbReference>
<dbReference type="Gene3D" id="3.30.70.330">
    <property type="match status" value="1"/>
</dbReference>
<dbReference type="HAMAP" id="MF_01369_B">
    <property type="entry name" value="Ribosomal_uL23_B"/>
    <property type="match status" value="1"/>
</dbReference>
<dbReference type="InterPro" id="IPR012677">
    <property type="entry name" value="Nucleotide-bd_a/b_plait_sf"/>
</dbReference>
<dbReference type="InterPro" id="IPR013025">
    <property type="entry name" value="Ribosomal_uL23-like"/>
</dbReference>
<dbReference type="InterPro" id="IPR012678">
    <property type="entry name" value="Ribosomal_uL23/eL15/eS24_sf"/>
</dbReference>
<dbReference type="InterPro" id="IPR001014">
    <property type="entry name" value="Ribosomal_uL23_CS"/>
</dbReference>
<dbReference type="NCBIfam" id="NF004359">
    <property type="entry name" value="PRK05738.1-3"/>
    <property type="match status" value="1"/>
</dbReference>
<dbReference type="NCBIfam" id="NF004363">
    <property type="entry name" value="PRK05738.2-4"/>
    <property type="match status" value="1"/>
</dbReference>
<dbReference type="NCBIfam" id="NF004366">
    <property type="entry name" value="PRK05738.3-2"/>
    <property type="match status" value="1"/>
</dbReference>
<dbReference type="PANTHER" id="PTHR11620">
    <property type="entry name" value="60S RIBOSOMAL PROTEIN L23A"/>
    <property type="match status" value="1"/>
</dbReference>
<dbReference type="Pfam" id="PF00276">
    <property type="entry name" value="Ribosomal_L23"/>
    <property type="match status" value="1"/>
</dbReference>
<dbReference type="SUPFAM" id="SSF54189">
    <property type="entry name" value="Ribosomal proteins S24e, L23 and L15e"/>
    <property type="match status" value="1"/>
</dbReference>
<dbReference type="PROSITE" id="PS00050">
    <property type="entry name" value="RIBOSOMAL_L23"/>
    <property type="match status" value="1"/>
</dbReference>